<protein>
    <recommendedName>
        <fullName>NADH-quinone oxidoreductase subunit L</fullName>
        <ecNumber>7.1.1.-</ecNumber>
    </recommendedName>
    <alternativeName>
        <fullName>NADH dehydrogenase I subunit L</fullName>
    </alternativeName>
    <alternativeName>
        <fullName>NDH-1 subunit L</fullName>
    </alternativeName>
</protein>
<reference key="1">
    <citation type="journal article" date="2006" name="PLoS Genet.">
        <title>Genome sequence of Rickettsia bellii illuminates the role of amoebae in gene exchanges between intracellular pathogens.</title>
        <authorList>
            <person name="Ogata H."/>
            <person name="La Scola B."/>
            <person name="Audic S."/>
            <person name="Renesto P."/>
            <person name="Blanc G."/>
            <person name="Robert C."/>
            <person name="Fournier P.-E."/>
            <person name="Claverie J.-M."/>
            <person name="Raoult D."/>
        </authorList>
    </citation>
    <scope>NUCLEOTIDE SEQUENCE [LARGE SCALE GENOMIC DNA]</scope>
    <source>
        <strain>RML369-C</strain>
    </source>
</reference>
<feature type="chain" id="PRO_0000287835" description="NADH-quinone oxidoreductase subunit L">
    <location>
        <begin position="1"/>
        <end position="642"/>
    </location>
</feature>
<feature type="transmembrane region" description="Helical" evidence="2">
    <location>
        <begin position="4"/>
        <end position="24"/>
    </location>
</feature>
<feature type="transmembrane region" description="Helical" evidence="2">
    <location>
        <begin position="31"/>
        <end position="51"/>
    </location>
</feature>
<feature type="transmembrane region" description="Helical" evidence="2">
    <location>
        <begin position="88"/>
        <end position="108"/>
    </location>
</feature>
<feature type="transmembrane region" description="Helical" evidence="2">
    <location>
        <begin position="114"/>
        <end position="134"/>
    </location>
</feature>
<feature type="transmembrane region" description="Helical" evidence="2">
    <location>
        <begin position="137"/>
        <end position="157"/>
    </location>
</feature>
<feature type="transmembrane region" description="Helical" evidence="2">
    <location>
        <begin position="171"/>
        <end position="191"/>
    </location>
</feature>
<feature type="transmembrane region" description="Helical" evidence="2">
    <location>
        <begin position="213"/>
        <end position="233"/>
    </location>
</feature>
<feature type="transmembrane region" description="Helical" evidence="2">
    <location>
        <begin position="255"/>
        <end position="275"/>
    </location>
</feature>
<feature type="transmembrane region" description="Helical" evidence="2">
    <location>
        <begin position="287"/>
        <end position="307"/>
    </location>
</feature>
<feature type="transmembrane region" description="Helical" evidence="2">
    <location>
        <begin position="315"/>
        <end position="335"/>
    </location>
</feature>
<feature type="transmembrane region" description="Helical" evidence="2">
    <location>
        <begin position="340"/>
        <end position="360"/>
    </location>
</feature>
<feature type="transmembrane region" description="Helical" evidence="2">
    <location>
        <begin position="383"/>
        <end position="403"/>
    </location>
</feature>
<feature type="transmembrane region" description="Helical" evidence="2">
    <location>
        <begin position="418"/>
        <end position="438"/>
    </location>
</feature>
<feature type="transmembrane region" description="Helical" evidence="2">
    <location>
        <begin position="467"/>
        <end position="487"/>
    </location>
</feature>
<feature type="transmembrane region" description="Helical" evidence="2">
    <location>
        <begin position="513"/>
        <end position="533"/>
    </location>
</feature>
<feature type="transmembrane region" description="Helical" evidence="2">
    <location>
        <begin position="622"/>
        <end position="642"/>
    </location>
</feature>
<name>NUOL_RICBR</name>
<comment type="function">
    <text evidence="1">NDH-1 shuttles electrons from NADH, via FMN and iron-sulfur (Fe-S) centers, to quinones in the respiratory chain. Couples the redox reaction to proton translocation (for every two electrons transferred, four hydrogen ions are translocated across the cytoplasmic membrane), and thus conserves the redox energy in a proton gradient (By similarity).</text>
</comment>
<comment type="catalytic activity">
    <reaction>
        <text>a quinone + NADH + 5 H(+)(in) = a quinol + NAD(+) + 4 H(+)(out)</text>
        <dbReference type="Rhea" id="RHEA:57888"/>
        <dbReference type="ChEBI" id="CHEBI:15378"/>
        <dbReference type="ChEBI" id="CHEBI:24646"/>
        <dbReference type="ChEBI" id="CHEBI:57540"/>
        <dbReference type="ChEBI" id="CHEBI:57945"/>
        <dbReference type="ChEBI" id="CHEBI:132124"/>
    </reaction>
</comment>
<comment type="subcellular location">
    <subcellularLocation>
        <location evidence="3">Cell membrane</location>
        <topology evidence="3">Multi-pass membrane protein</topology>
    </subcellularLocation>
</comment>
<comment type="similarity">
    <text evidence="3">Belongs to the complex I subunit 5 family.</text>
</comment>
<proteinExistence type="inferred from homology"/>
<accession>Q1RKE6</accession>
<gene>
    <name type="primary">nuoL</name>
    <name type="ordered locus">RBE_0087</name>
</gene>
<keyword id="KW-1003">Cell membrane</keyword>
<keyword id="KW-0472">Membrane</keyword>
<keyword id="KW-0520">NAD</keyword>
<keyword id="KW-0874">Quinone</keyword>
<keyword id="KW-1278">Translocase</keyword>
<keyword id="KW-0812">Transmembrane</keyword>
<keyword id="KW-1133">Transmembrane helix</keyword>
<dbReference type="EC" id="7.1.1.-"/>
<dbReference type="EMBL" id="CP000087">
    <property type="protein sequence ID" value="ABE04168.1"/>
    <property type="molecule type" value="Genomic_DNA"/>
</dbReference>
<dbReference type="RefSeq" id="WP_011476783.1">
    <property type="nucleotide sequence ID" value="NC_007940.1"/>
</dbReference>
<dbReference type="SMR" id="Q1RKE6"/>
<dbReference type="KEGG" id="rbe:RBE_0087"/>
<dbReference type="eggNOG" id="COG1009">
    <property type="taxonomic scope" value="Bacteria"/>
</dbReference>
<dbReference type="HOGENOM" id="CLU_007100_6_0_5"/>
<dbReference type="OrthoDB" id="9811798at2"/>
<dbReference type="Proteomes" id="UP000001951">
    <property type="component" value="Chromosome"/>
</dbReference>
<dbReference type="GO" id="GO:0005886">
    <property type="term" value="C:plasma membrane"/>
    <property type="evidence" value="ECO:0007669"/>
    <property type="project" value="UniProtKB-SubCell"/>
</dbReference>
<dbReference type="GO" id="GO:0008137">
    <property type="term" value="F:NADH dehydrogenase (ubiquinone) activity"/>
    <property type="evidence" value="ECO:0007669"/>
    <property type="project" value="InterPro"/>
</dbReference>
<dbReference type="GO" id="GO:0048038">
    <property type="term" value="F:quinone binding"/>
    <property type="evidence" value="ECO:0007669"/>
    <property type="project" value="UniProtKB-KW"/>
</dbReference>
<dbReference type="GO" id="GO:0042773">
    <property type="term" value="P:ATP synthesis coupled electron transport"/>
    <property type="evidence" value="ECO:0007669"/>
    <property type="project" value="InterPro"/>
</dbReference>
<dbReference type="GO" id="GO:0015990">
    <property type="term" value="P:electron transport coupled proton transport"/>
    <property type="evidence" value="ECO:0007669"/>
    <property type="project" value="TreeGrafter"/>
</dbReference>
<dbReference type="Gene3D" id="1.20.5.2700">
    <property type="match status" value="1"/>
</dbReference>
<dbReference type="InterPro" id="IPR018393">
    <property type="entry name" value="NADHpl_OxRdtase_5_subgr"/>
</dbReference>
<dbReference type="InterPro" id="IPR001750">
    <property type="entry name" value="ND/Mrp_TM"/>
</dbReference>
<dbReference type="InterPro" id="IPR003945">
    <property type="entry name" value="NU5C-like"/>
</dbReference>
<dbReference type="InterPro" id="IPR001516">
    <property type="entry name" value="Proton_antipo_N"/>
</dbReference>
<dbReference type="NCBIfam" id="TIGR01974">
    <property type="entry name" value="NDH_I_L"/>
    <property type="match status" value="1"/>
</dbReference>
<dbReference type="NCBIfam" id="NF005141">
    <property type="entry name" value="PRK06590.1"/>
    <property type="match status" value="1"/>
</dbReference>
<dbReference type="PANTHER" id="PTHR42829">
    <property type="entry name" value="NADH-UBIQUINONE OXIDOREDUCTASE CHAIN 5"/>
    <property type="match status" value="1"/>
</dbReference>
<dbReference type="PANTHER" id="PTHR42829:SF2">
    <property type="entry name" value="NADH-UBIQUINONE OXIDOREDUCTASE CHAIN 5"/>
    <property type="match status" value="1"/>
</dbReference>
<dbReference type="Pfam" id="PF00361">
    <property type="entry name" value="Proton_antipo_M"/>
    <property type="match status" value="1"/>
</dbReference>
<dbReference type="Pfam" id="PF00662">
    <property type="entry name" value="Proton_antipo_N"/>
    <property type="match status" value="1"/>
</dbReference>
<dbReference type="PRINTS" id="PR01434">
    <property type="entry name" value="NADHDHGNASE5"/>
</dbReference>
<dbReference type="PRINTS" id="PR01435">
    <property type="entry name" value="NPOXDRDTASE5"/>
</dbReference>
<sequence length="642" mass="71911">MYKSIAIMIILLPLASALINGLFVRRIDKKLASIVATSFLSLSALFALIIFYHTGLNGHIIHIKLLPWIEVSQFKVDWSIYIDQLTSIMFIAVTWVSSVVHIYSLGYMSRDKGIVRFLSFLSLFTFFMLMLVSADNFLQLFFGWEGVGICSYLLIGFWYSKESANKAAIKAFIANRVGDFAFILGVITIIFYCHSANYEDVFLLAPKLANTKILLADFEISILDIACLLLFIGCMGKSAQIGLHVWLPDAMEGPTPVSALIHAATMVTAGVFLVARCSYLFEYSPMVLQFITIIGGITCLFAASIAIMQNDIKKIIAYSTCSQLGYMFMACGVSAYNSGIFHLVTHAFFKALLFLSAGSVIHAVHEQDIFKMGELRNKMPITYGNFLIGSLALIGIYPLAGFYSKDSILEAAYSSGSFMFIFGILAAILTAIYSMKIIMLVFHGKTRLEKDVFEHAHEPPKVMNNPLTLLVAGSFFSGMIGYYLLSMDKPNGYFHDSLLNLHAYKLLITHPPLHIKLLPMVVGIIGIVVGIYLYKSDVVMSFLRRQESSKDNYFTKILINKYYFDELYNFLIVKPINCLACLFYSGDQKIIDRFGPNGFARSVNCFSRLTGKTQTGYVFNYTLYVVLFVVVTISYFVWLVAV</sequence>
<organism>
    <name type="scientific">Rickettsia bellii (strain RML369-C)</name>
    <dbReference type="NCBI Taxonomy" id="336407"/>
    <lineage>
        <taxon>Bacteria</taxon>
        <taxon>Pseudomonadati</taxon>
        <taxon>Pseudomonadota</taxon>
        <taxon>Alphaproteobacteria</taxon>
        <taxon>Rickettsiales</taxon>
        <taxon>Rickettsiaceae</taxon>
        <taxon>Rickettsieae</taxon>
        <taxon>Rickettsia</taxon>
        <taxon>belli group</taxon>
    </lineage>
</organism>
<evidence type="ECO:0000250" key="1"/>
<evidence type="ECO:0000255" key="2"/>
<evidence type="ECO:0000305" key="3"/>